<reference key="1">
    <citation type="submission" date="2007-08" db="EMBL/GenBank/DDBJ databases">
        <title>Complete sequence of Thermotoga lettingae TMO.</title>
        <authorList>
            <consortium name="US DOE Joint Genome Institute"/>
            <person name="Copeland A."/>
            <person name="Lucas S."/>
            <person name="Lapidus A."/>
            <person name="Barry K."/>
            <person name="Glavina del Rio T."/>
            <person name="Dalin E."/>
            <person name="Tice H."/>
            <person name="Pitluck S."/>
            <person name="Foster B."/>
            <person name="Bruce D."/>
            <person name="Schmutz J."/>
            <person name="Larimer F."/>
            <person name="Land M."/>
            <person name="Hauser L."/>
            <person name="Kyrpides N."/>
            <person name="Mikhailova N."/>
            <person name="Nelson K."/>
            <person name="Gogarten J.P."/>
            <person name="Noll K."/>
            <person name="Richardson P."/>
        </authorList>
    </citation>
    <scope>NUCLEOTIDE SEQUENCE [LARGE SCALE GENOMIC DNA]</scope>
    <source>
        <strain>ATCC BAA-301 / DSM 14385 / NBRC 107922 / TMO</strain>
    </source>
</reference>
<keyword id="KW-0067">ATP-binding</keyword>
<keyword id="KW-0963">Cytoplasm</keyword>
<keyword id="KW-0418">Kinase</keyword>
<keyword id="KW-0460">Magnesium</keyword>
<keyword id="KW-0479">Metal-binding</keyword>
<keyword id="KW-0547">Nucleotide-binding</keyword>
<keyword id="KW-1185">Reference proteome</keyword>
<keyword id="KW-0808">Transferase</keyword>
<accession>A8F3X9</accession>
<feature type="chain" id="PRO_1000057187" description="Acetate kinase">
    <location>
        <begin position="1"/>
        <end position="405"/>
    </location>
</feature>
<feature type="active site" description="Proton donor/acceptor" evidence="1">
    <location>
        <position position="147"/>
    </location>
</feature>
<feature type="binding site" evidence="1">
    <location>
        <position position="7"/>
    </location>
    <ligand>
        <name>Mg(2+)</name>
        <dbReference type="ChEBI" id="CHEBI:18420"/>
    </ligand>
</feature>
<feature type="binding site" evidence="1">
    <location>
        <position position="14"/>
    </location>
    <ligand>
        <name>ATP</name>
        <dbReference type="ChEBI" id="CHEBI:30616"/>
    </ligand>
</feature>
<feature type="binding site" evidence="1">
    <location>
        <position position="90"/>
    </location>
    <ligand>
        <name>substrate</name>
    </ligand>
</feature>
<feature type="binding site" evidence="1">
    <location>
        <begin position="207"/>
        <end position="211"/>
    </location>
    <ligand>
        <name>ATP</name>
        <dbReference type="ChEBI" id="CHEBI:30616"/>
    </ligand>
</feature>
<feature type="binding site" evidence="1">
    <location>
        <begin position="282"/>
        <end position="284"/>
    </location>
    <ligand>
        <name>ATP</name>
        <dbReference type="ChEBI" id="CHEBI:30616"/>
    </ligand>
</feature>
<feature type="binding site" evidence="1">
    <location>
        <begin position="330"/>
        <end position="334"/>
    </location>
    <ligand>
        <name>ATP</name>
        <dbReference type="ChEBI" id="CHEBI:30616"/>
    </ligand>
</feature>
<feature type="binding site" evidence="1">
    <location>
        <position position="383"/>
    </location>
    <ligand>
        <name>Mg(2+)</name>
        <dbReference type="ChEBI" id="CHEBI:18420"/>
    </ligand>
</feature>
<feature type="site" description="Transition state stabilizer" evidence="1">
    <location>
        <position position="179"/>
    </location>
</feature>
<feature type="site" description="Transition state stabilizer" evidence="1">
    <location>
        <position position="240"/>
    </location>
</feature>
<sequence>MKILVVNCGSSSVKYQFIDMKGEKVLCKGLAERVGIEGSRLVHKVNEDKHVIEKPMKDHEEALKLILETLLDREIGVIRDLSEISAVGHRVVHGAERFASSILIDEEVMKVLEENIHLAPLHNPPNIMGIKAVQKLLPQVPNVGVFDTAFHQSMPRKAFLYPLPYEFYEKYRIRRYGFHGTSHRYVSKRAAEILGRDYYDFKVITCHLGNGASIAAIRHGKSIDTSMGFTPLEGLVMGTRSGDIDPAIVIYMQQNLSIPVEEVYNILNKKSGVLGLSKLSSDMRDIEDAAESGNEMAQLALEIYIYRIAKYIGAYTAAMNGVDAIVFTAGVGENSPYVREKVCDYLGFLGVKIDRNLNNMKGVERIVSTPDSRVAILIVPTNEELVIARDTKQIVESGIKELKLF</sequence>
<comment type="function">
    <text evidence="1">Catalyzes the formation of acetyl phosphate from acetate and ATP. Can also catalyze the reverse reaction.</text>
</comment>
<comment type="catalytic activity">
    <reaction evidence="1">
        <text>acetate + ATP = acetyl phosphate + ADP</text>
        <dbReference type="Rhea" id="RHEA:11352"/>
        <dbReference type="ChEBI" id="CHEBI:22191"/>
        <dbReference type="ChEBI" id="CHEBI:30089"/>
        <dbReference type="ChEBI" id="CHEBI:30616"/>
        <dbReference type="ChEBI" id="CHEBI:456216"/>
        <dbReference type="EC" id="2.7.2.1"/>
    </reaction>
</comment>
<comment type="cofactor">
    <cofactor evidence="1">
        <name>Mg(2+)</name>
        <dbReference type="ChEBI" id="CHEBI:18420"/>
    </cofactor>
    <cofactor evidence="1">
        <name>Mn(2+)</name>
        <dbReference type="ChEBI" id="CHEBI:29035"/>
    </cofactor>
    <text evidence="1">Mg(2+). Can also accept Mn(2+).</text>
</comment>
<comment type="pathway">
    <text evidence="1">Metabolic intermediate biosynthesis; acetyl-CoA biosynthesis; acetyl-CoA from acetate: step 1/2.</text>
</comment>
<comment type="subunit">
    <text evidence="1">Homodimer.</text>
</comment>
<comment type="subcellular location">
    <subcellularLocation>
        <location evidence="1">Cytoplasm</location>
    </subcellularLocation>
</comment>
<comment type="similarity">
    <text evidence="1">Belongs to the acetokinase family.</text>
</comment>
<dbReference type="EC" id="2.7.2.1" evidence="1"/>
<dbReference type="EMBL" id="CP000812">
    <property type="protein sequence ID" value="ABV32863.1"/>
    <property type="molecule type" value="Genomic_DNA"/>
</dbReference>
<dbReference type="RefSeq" id="WP_012002344.1">
    <property type="nucleotide sequence ID" value="NZ_BSDV01000001.1"/>
</dbReference>
<dbReference type="SMR" id="A8F3X9"/>
<dbReference type="STRING" id="416591.Tlet_0293"/>
<dbReference type="KEGG" id="tle:Tlet_0293"/>
<dbReference type="eggNOG" id="COG0282">
    <property type="taxonomic scope" value="Bacteria"/>
</dbReference>
<dbReference type="HOGENOM" id="CLU_020352_0_1_0"/>
<dbReference type="OrthoDB" id="9802453at2"/>
<dbReference type="UniPathway" id="UPA00340">
    <property type="reaction ID" value="UER00458"/>
</dbReference>
<dbReference type="Proteomes" id="UP000002016">
    <property type="component" value="Chromosome"/>
</dbReference>
<dbReference type="GO" id="GO:0005737">
    <property type="term" value="C:cytoplasm"/>
    <property type="evidence" value="ECO:0007669"/>
    <property type="project" value="UniProtKB-SubCell"/>
</dbReference>
<dbReference type="GO" id="GO:0008776">
    <property type="term" value="F:acetate kinase activity"/>
    <property type="evidence" value="ECO:0007669"/>
    <property type="project" value="UniProtKB-UniRule"/>
</dbReference>
<dbReference type="GO" id="GO:0005524">
    <property type="term" value="F:ATP binding"/>
    <property type="evidence" value="ECO:0007669"/>
    <property type="project" value="UniProtKB-KW"/>
</dbReference>
<dbReference type="GO" id="GO:0000287">
    <property type="term" value="F:magnesium ion binding"/>
    <property type="evidence" value="ECO:0007669"/>
    <property type="project" value="UniProtKB-UniRule"/>
</dbReference>
<dbReference type="GO" id="GO:0006083">
    <property type="term" value="P:acetate metabolic process"/>
    <property type="evidence" value="ECO:0007669"/>
    <property type="project" value="TreeGrafter"/>
</dbReference>
<dbReference type="GO" id="GO:0006085">
    <property type="term" value="P:acetyl-CoA biosynthetic process"/>
    <property type="evidence" value="ECO:0007669"/>
    <property type="project" value="UniProtKB-UniRule"/>
</dbReference>
<dbReference type="CDD" id="cd24010">
    <property type="entry name" value="ASKHA_NBD_AcK_PK"/>
    <property type="match status" value="1"/>
</dbReference>
<dbReference type="Gene3D" id="3.30.420.40">
    <property type="match status" value="2"/>
</dbReference>
<dbReference type="HAMAP" id="MF_00020">
    <property type="entry name" value="Acetate_kinase"/>
    <property type="match status" value="1"/>
</dbReference>
<dbReference type="InterPro" id="IPR004372">
    <property type="entry name" value="Ac/propionate_kinase"/>
</dbReference>
<dbReference type="InterPro" id="IPR000890">
    <property type="entry name" value="Aliphatic_acid_kin_short-chain"/>
</dbReference>
<dbReference type="InterPro" id="IPR023865">
    <property type="entry name" value="Aliphatic_acid_kinase_CS"/>
</dbReference>
<dbReference type="InterPro" id="IPR043129">
    <property type="entry name" value="ATPase_NBD"/>
</dbReference>
<dbReference type="NCBIfam" id="TIGR00016">
    <property type="entry name" value="ackA"/>
    <property type="match status" value="1"/>
</dbReference>
<dbReference type="PANTHER" id="PTHR21060">
    <property type="entry name" value="ACETATE KINASE"/>
    <property type="match status" value="1"/>
</dbReference>
<dbReference type="PANTHER" id="PTHR21060:SF15">
    <property type="entry name" value="ACETATE KINASE-RELATED"/>
    <property type="match status" value="1"/>
</dbReference>
<dbReference type="Pfam" id="PF00871">
    <property type="entry name" value="Acetate_kinase"/>
    <property type="match status" value="1"/>
</dbReference>
<dbReference type="PIRSF" id="PIRSF000722">
    <property type="entry name" value="Acetate_prop_kin"/>
    <property type="match status" value="1"/>
</dbReference>
<dbReference type="PRINTS" id="PR00471">
    <property type="entry name" value="ACETATEKNASE"/>
</dbReference>
<dbReference type="SUPFAM" id="SSF53067">
    <property type="entry name" value="Actin-like ATPase domain"/>
    <property type="match status" value="2"/>
</dbReference>
<dbReference type="PROSITE" id="PS01075">
    <property type="entry name" value="ACETATE_KINASE_1"/>
    <property type="match status" value="1"/>
</dbReference>
<dbReference type="PROSITE" id="PS01076">
    <property type="entry name" value="ACETATE_KINASE_2"/>
    <property type="match status" value="1"/>
</dbReference>
<organism>
    <name type="scientific">Pseudothermotoga lettingae (strain ATCC BAA-301 / DSM 14385 / NBRC 107922 / TMO)</name>
    <name type="common">Thermotoga lettingae</name>
    <dbReference type="NCBI Taxonomy" id="416591"/>
    <lineage>
        <taxon>Bacteria</taxon>
        <taxon>Thermotogati</taxon>
        <taxon>Thermotogota</taxon>
        <taxon>Thermotogae</taxon>
        <taxon>Thermotogales</taxon>
        <taxon>Thermotogaceae</taxon>
        <taxon>Pseudothermotoga</taxon>
    </lineage>
</organism>
<protein>
    <recommendedName>
        <fullName evidence="1">Acetate kinase</fullName>
        <ecNumber evidence="1">2.7.2.1</ecNumber>
    </recommendedName>
    <alternativeName>
        <fullName evidence="1">Acetokinase</fullName>
    </alternativeName>
</protein>
<evidence type="ECO:0000255" key="1">
    <source>
        <dbReference type="HAMAP-Rule" id="MF_00020"/>
    </source>
</evidence>
<gene>
    <name evidence="1" type="primary">ackA</name>
    <name type="ordered locus">Tlet_0293</name>
</gene>
<name>ACKA_PSELT</name>
<proteinExistence type="inferred from homology"/>